<name>PROA_DEHM1</name>
<accession>Q3Z6Z9</accession>
<reference key="1">
    <citation type="journal article" date="2005" name="Science">
        <title>Genome sequence of the PCE-dechlorinating bacterium Dehalococcoides ethenogenes.</title>
        <authorList>
            <person name="Seshadri R."/>
            <person name="Adrian L."/>
            <person name="Fouts D.E."/>
            <person name="Eisen J.A."/>
            <person name="Phillippy A.M."/>
            <person name="Methe B.A."/>
            <person name="Ward N.L."/>
            <person name="Nelson W.C."/>
            <person name="DeBoy R.T."/>
            <person name="Khouri H.M."/>
            <person name="Kolonay J.F."/>
            <person name="Dodson R.J."/>
            <person name="Daugherty S.C."/>
            <person name="Brinkac L.M."/>
            <person name="Sullivan S.A."/>
            <person name="Madupu R."/>
            <person name="Nelson K.E."/>
            <person name="Kang K.H."/>
            <person name="Impraim M."/>
            <person name="Tran K."/>
            <person name="Robinson J.M."/>
            <person name="Forberger H.A."/>
            <person name="Fraser C.M."/>
            <person name="Zinder S.H."/>
            <person name="Heidelberg J.F."/>
        </authorList>
    </citation>
    <scope>NUCLEOTIDE SEQUENCE [LARGE SCALE GENOMIC DNA]</scope>
    <source>
        <strain>ATCC BAA-2266 / KCTC 15142 / 195</strain>
    </source>
</reference>
<feature type="chain" id="PRO_0000230001" description="Gamma-glutamyl phosphate reductase">
    <location>
        <begin position="1"/>
        <end position="424"/>
    </location>
</feature>
<sequence>MEKALLEIEEKARLAKAASRPLSYASSAQKDAALKNIAACLLNNAPAILEANLKDQTEAKAAGMTAAMLDRLIITQSRLEGIAKDTLAIAALPDPVGEIFDMNTMPNGLVIGKKRVPLGVIAAIYESRPNVTVDIAALCLKAGNAVILRGGKETIHSNTILARLIRQAVEEAGLPQEAVQFIENTEHSLVNHLLKLSDQIDLVIPRGGAGLISYVKQNSFIPVVAGGIGVVHIYVDADANIADAVNIAYNSKVQRPTVCNAMDTLLVHKDIAAAFLPVVAAEWSKAGVEIRADKTAMEILENASSCKLIPAAADDWGKEFLALVAAVKVVDSLDEALSHIARYGSGHTESIVTQNYTSSQRFLNEVDAAAVMVNASTRFTDGSQFGLGAELGISTQKMHARGPMGLKEITSYKWIVYGNGQIRG</sequence>
<organism>
    <name type="scientific">Dehalococcoides mccartyi (strain ATCC BAA-2266 / KCTC 15142 / 195)</name>
    <name type="common">Dehalococcoides ethenogenes (strain 195)</name>
    <dbReference type="NCBI Taxonomy" id="243164"/>
    <lineage>
        <taxon>Bacteria</taxon>
        <taxon>Bacillati</taxon>
        <taxon>Chloroflexota</taxon>
        <taxon>Dehalococcoidia</taxon>
        <taxon>Dehalococcoidales</taxon>
        <taxon>Dehalococcoidaceae</taxon>
        <taxon>Dehalococcoides</taxon>
    </lineage>
</organism>
<dbReference type="EC" id="1.2.1.41" evidence="1"/>
<dbReference type="EMBL" id="CP000027">
    <property type="protein sequence ID" value="AAW39420.1"/>
    <property type="molecule type" value="Genomic_DNA"/>
</dbReference>
<dbReference type="RefSeq" id="WP_010936977.1">
    <property type="nucleotide sequence ID" value="NC_002936.3"/>
</dbReference>
<dbReference type="SMR" id="Q3Z6Z9"/>
<dbReference type="FunCoup" id="Q3Z6Z9">
    <property type="interactions" value="261"/>
</dbReference>
<dbReference type="STRING" id="243164.DET1288"/>
<dbReference type="GeneID" id="3229380"/>
<dbReference type="KEGG" id="det:DET1288"/>
<dbReference type="PATRIC" id="fig|243164.10.peg.1219"/>
<dbReference type="eggNOG" id="COG0014">
    <property type="taxonomic scope" value="Bacteria"/>
</dbReference>
<dbReference type="HOGENOM" id="CLU_030231_0_0_0"/>
<dbReference type="InParanoid" id="Q3Z6Z9"/>
<dbReference type="UniPathway" id="UPA00098">
    <property type="reaction ID" value="UER00360"/>
</dbReference>
<dbReference type="Proteomes" id="UP000008289">
    <property type="component" value="Chromosome"/>
</dbReference>
<dbReference type="GO" id="GO:0005737">
    <property type="term" value="C:cytoplasm"/>
    <property type="evidence" value="ECO:0007669"/>
    <property type="project" value="UniProtKB-SubCell"/>
</dbReference>
<dbReference type="GO" id="GO:0004350">
    <property type="term" value="F:glutamate-5-semialdehyde dehydrogenase activity"/>
    <property type="evidence" value="ECO:0007669"/>
    <property type="project" value="UniProtKB-UniRule"/>
</dbReference>
<dbReference type="GO" id="GO:0050661">
    <property type="term" value="F:NADP binding"/>
    <property type="evidence" value="ECO:0007669"/>
    <property type="project" value="InterPro"/>
</dbReference>
<dbReference type="GO" id="GO:0055129">
    <property type="term" value="P:L-proline biosynthetic process"/>
    <property type="evidence" value="ECO:0007669"/>
    <property type="project" value="UniProtKB-UniRule"/>
</dbReference>
<dbReference type="CDD" id="cd07079">
    <property type="entry name" value="ALDH_F18-19_ProA-GPR"/>
    <property type="match status" value="1"/>
</dbReference>
<dbReference type="FunFam" id="3.40.309.10:FF:000006">
    <property type="entry name" value="Gamma-glutamyl phosphate reductase"/>
    <property type="match status" value="1"/>
</dbReference>
<dbReference type="Gene3D" id="3.40.605.10">
    <property type="entry name" value="Aldehyde Dehydrogenase, Chain A, domain 1"/>
    <property type="match status" value="1"/>
</dbReference>
<dbReference type="Gene3D" id="3.40.309.10">
    <property type="entry name" value="Aldehyde Dehydrogenase, Chain A, domain 2"/>
    <property type="match status" value="1"/>
</dbReference>
<dbReference type="HAMAP" id="MF_00412">
    <property type="entry name" value="ProA"/>
    <property type="match status" value="1"/>
</dbReference>
<dbReference type="InterPro" id="IPR016161">
    <property type="entry name" value="Ald_DH/histidinol_DH"/>
</dbReference>
<dbReference type="InterPro" id="IPR016163">
    <property type="entry name" value="Ald_DH_C"/>
</dbReference>
<dbReference type="InterPro" id="IPR016162">
    <property type="entry name" value="Ald_DH_N"/>
</dbReference>
<dbReference type="InterPro" id="IPR015590">
    <property type="entry name" value="Aldehyde_DH_dom"/>
</dbReference>
<dbReference type="InterPro" id="IPR020593">
    <property type="entry name" value="G-glutamylP_reductase_CS"/>
</dbReference>
<dbReference type="InterPro" id="IPR012134">
    <property type="entry name" value="Glu-5-SA_DH"/>
</dbReference>
<dbReference type="InterPro" id="IPR000965">
    <property type="entry name" value="GPR_dom"/>
</dbReference>
<dbReference type="NCBIfam" id="NF001221">
    <property type="entry name" value="PRK00197.1"/>
    <property type="match status" value="1"/>
</dbReference>
<dbReference type="NCBIfam" id="TIGR00407">
    <property type="entry name" value="proA"/>
    <property type="match status" value="1"/>
</dbReference>
<dbReference type="PANTHER" id="PTHR11063:SF8">
    <property type="entry name" value="DELTA-1-PYRROLINE-5-CARBOXYLATE SYNTHASE"/>
    <property type="match status" value="1"/>
</dbReference>
<dbReference type="PANTHER" id="PTHR11063">
    <property type="entry name" value="GLUTAMATE SEMIALDEHYDE DEHYDROGENASE"/>
    <property type="match status" value="1"/>
</dbReference>
<dbReference type="Pfam" id="PF00171">
    <property type="entry name" value="Aldedh"/>
    <property type="match status" value="1"/>
</dbReference>
<dbReference type="PIRSF" id="PIRSF000151">
    <property type="entry name" value="GPR"/>
    <property type="match status" value="1"/>
</dbReference>
<dbReference type="SUPFAM" id="SSF53720">
    <property type="entry name" value="ALDH-like"/>
    <property type="match status" value="1"/>
</dbReference>
<dbReference type="PROSITE" id="PS01223">
    <property type="entry name" value="PROA"/>
    <property type="match status" value="1"/>
</dbReference>
<keyword id="KW-0028">Amino-acid biosynthesis</keyword>
<keyword id="KW-0963">Cytoplasm</keyword>
<keyword id="KW-0521">NADP</keyword>
<keyword id="KW-0560">Oxidoreductase</keyword>
<keyword id="KW-0641">Proline biosynthesis</keyword>
<comment type="function">
    <text evidence="1">Catalyzes the NADPH-dependent reduction of L-glutamate 5-phosphate into L-glutamate 5-semialdehyde and phosphate. The product spontaneously undergoes cyclization to form 1-pyrroline-5-carboxylate.</text>
</comment>
<comment type="catalytic activity">
    <reaction evidence="1">
        <text>L-glutamate 5-semialdehyde + phosphate + NADP(+) = L-glutamyl 5-phosphate + NADPH + H(+)</text>
        <dbReference type="Rhea" id="RHEA:19541"/>
        <dbReference type="ChEBI" id="CHEBI:15378"/>
        <dbReference type="ChEBI" id="CHEBI:43474"/>
        <dbReference type="ChEBI" id="CHEBI:57783"/>
        <dbReference type="ChEBI" id="CHEBI:58066"/>
        <dbReference type="ChEBI" id="CHEBI:58274"/>
        <dbReference type="ChEBI" id="CHEBI:58349"/>
        <dbReference type="EC" id="1.2.1.41"/>
    </reaction>
</comment>
<comment type="pathway">
    <text evidence="1">Amino-acid biosynthesis; L-proline biosynthesis; L-glutamate 5-semialdehyde from L-glutamate: step 2/2.</text>
</comment>
<comment type="subcellular location">
    <subcellularLocation>
        <location evidence="1">Cytoplasm</location>
    </subcellularLocation>
</comment>
<comment type="similarity">
    <text evidence="1">Belongs to the gamma-glutamyl phosphate reductase family.</text>
</comment>
<gene>
    <name evidence="1" type="primary">proA</name>
    <name type="ordered locus">DET1288</name>
</gene>
<protein>
    <recommendedName>
        <fullName evidence="1">Gamma-glutamyl phosphate reductase</fullName>
        <shortName evidence="1">GPR</shortName>
        <ecNumber evidence="1">1.2.1.41</ecNumber>
    </recommendedName>
    <alternativeName>
        <fullName evidence="1">Glutamate-5-semialdehyde dehydrogenase</fullName>
    </alternativeName>
    <alternativeName>
        <fullName evidence="1">Glutamyl-gamma-semialdehyde dehydrogenase</fullName>
        <shortName evidence="1">GSA dehydrogenase</shortName>
    </alternativeName>
</protein>
<evidence type="ECO:0000255" key="1">
    <source>
        <dbReference type="HAMAP-Rule" id="MF_00412"/>
    </source>
</evidence>
<proteinExistence type="inferred from homology"/>